<sequence>MHCPFCSENDTKVIDSRLVADGHQVRRRRQCLACNERFTTFETAELVMPRVIKSNGNREPFDEEKMIGGLQRALEKRPVSADAIELAISTIKSKLRATGEREVPSKLIGNLVMEQLKVLDKVAYIRFASVYRSFEDVREFGEEIAKLQD</sequence>
<organism>
    <name type="scientific">Vibrio cholerae serotype O1 (strain ATCC 39315 / El Tor Inaba N16961)</name>
    <dbReference type="NCBI Taxonomy" id="243277"/>
    <lineage>
        <taxon>Bacteria</taxon>
        <taxon>Pseudomonadati</taxon>
        <taxon>Pseudomonadota</taxon>
        <taxon>Gammaproteobacteria</taxon>
        <taxon>Vibrionales</taxon>
        <taxon>Vibrionaceae</taxon>
        <taxon>Vibrio</taxon>
    </lineage>
</organism>
<accession>Q9KPU0</accession>
<comment type="function">
    <text evidence="1">Negatively regulates transcription of bacterial ribonucleotide reductase nrd genes and operons by binding to NrdR-boxes.</text>
</comment>
<comment type="cofactor">
    <cofactor evidence="1">
        <name>Zn(2+)</name>
        <dbReference type="ChEBI" id="CHEBI:29105"/>
    </cofactor>
    <text evidence="1">Binds 1 zinc ion.</text>
</comment>
<comment type="similarity">
    <text evidence="1">Belongs to the NrdR family.</text>
</comment>
<comment type="sequence caution" evidence="2">
    <conflict type="erroneous initiation">
        <sequence resource="EMBL-CDS" id="AAF95416"/>
    </conflict>
</comment>
<proteinExistence type="inferred from homology"/>
<keyword id="KW-0067">ATP-binding</keyword>
<keyword id="KW-0238">DNA-binding</keyword>
<keyword id="KW-0479">Metal-binding</keyword>
<keyword id="KW-0547">Nucleotide-binding</keyword>
<keyword id="KW-1185">Reference proteome</keyword>
<keyword id="KW-0678">Repressor</keyword>
<keyword id="KW-0804">Transcription</keyword>
<keyword id="KW-0805">Transcription regulation</keyword>
<keyword id="KW-0862">Zinc</keyword>
<keyword id="KW-0863">Zinc-finger</keyword>
<protein>
    <recommendedName>
        <fullName evidence="1">Transcriptional repressor NrdR</fullName>
    </recommendedName>
</protein>
<evidence type="ECO:0000255" key="1">
    <source>
        <dbReference type="HAMAP-Rule" id="MF_00440"/>
    </source>
</evidence>
<evidence type="ECO:0000305" key="2"/>
<feature type="chain" id="PRO_0000182377" description="Transcriptional repressor NrdR">
    <location>
        <begin position="1"/>
        <end position="149"/>
    </location>
</feature>
<feature type="domain" description="ATP-cone" evidence="1">
    <location>
        <begin position="49"/>
        <end position="139"/>
    </location>
</feature>
<feature type="zinc finger region" evidence="1">
    <location>
        <begin position="3"/>
        <end position="34"/>
    </location>
</feature>
<gene>
    <name evidence="1" type="primary">nrdR</name>
    <name type="ordered locus">VC_2272</name>
</gene>
<name>NRDR_VIBCH</name>
<reference key="1">
    <citation type="journal article" date="2000" name="Nature">
        <title>DNA sequence of both chromosomes of the cholera pathogen Vibrio cholerae.</title>
        <authorList>
            <person name="Heidelberg J.F."/>
            <person name="Eisen J.A."/>
            <person name="Nelson W.C."/>
            <person name="Clayton R.A."/>
            <person name="Gwinn M.L."/>
            <person name="Dodson R.J."/>
            <person name="Haft D.H."/>
            <person name="Hickey E.K."/>
            <person name="Peterson J.D."/>
            <person name="Umayam L.A."/>
            <person name="Gill S.R."/>
            <person name="Nelson K.E."/>
            <person name="Read T.D."/>
            <person name="Tettelin H."/>
            <person name="Richardson D.L."/>
            <person name="Ermolaeva M.D."/>
            <person name="Vamathevan J.J."/>
            <person name="Bass S."/>
            <person name="Qin H."/>
            <person name="Dragoi I."/>
            <person name="Sellers P."/>
            <person name="McDonald L.A."/>
            <person name="Utterback T.R."/>
            <person name="Fleischmann R.D."/>
            <person name="Nierman W.C."/>
            <person name="White O."/>
            <person name="Salzberg S.L."/>
            <person name="Smith H.O."/>
            <person name="Colwell R.R."/>
            <person name="Mekalanos J.J."/>
            <person name="Venter J.C."/>
            <person name="Fraser C.M."/>
        </authorList>
    </citation>
    <scope>NUCLEOTIDE SEQUENCE [LARGE SCALE GENOMIC DNA]</scope>
    <source>
        <strain>ATCC 39315 / El Tor Inaba N16961</strain>
    </source>
</reference>
<dbReference type="EMBL" id="AE003852">
    <property type="protein sequence ID" value="AAF95416.1"/>
    <property type="status" value="ALT_INIT"/>
    <property type="molecule type" value="Genomic_DNA"/>
</dbReference>
<dbReference type="PIR" id="G82098">
    <property type="entry name" value="G82098"/>
</dbReference>
<dbReference type="RefSeq" id="NP_231903.2">
    <property type="nucleotide sequence ID" value="NC_002505.1"/>
</dbReference>
<dbReference type="RefSeq" id="WP_000543544.1">
    <property type="nucleotide sequence ID" value="NZ_LT906614.1"/>
</dbReference>
<dbReference type="SMR" id="Q9KPU0"/>
<dbReference type="STRING" id="243277.VC_2272"/>
<dbReference type="DNASU" id="2613194"/>
<dbReference type="EnsemblBacteria" id="AAF95416">
    <property type="protein sequence ID" value="AAF95416"/>
    <property type="gene ID" value="VC_2272"/>
</dbReference>
<dbReference type="GeneID" id="89513734"/>
<dbReference type="KEGG" id="vch:VC_2272"/>
<dbReference type="PATRIC" id="fig|243277.26.peg.2167"/>
<dbReference type="eggNOG" id="COG1327">
    <property type="taxonomic scope" value="Bacteria"/>
</dbReference>
<dbReference type="HOGENOM" id="CLU_108412_0_0_6"/>
<dbReference type="Proteomes" id="UP000000584">
    <property type="component" value="Chromosome 1"/>
</dbReference>
<dbReference type="GO" id="GO:0005524">
    <property type="term" value="F:ATP binding"/>
    <property type="evidence" value="ECO:0007669"/>
    <property type="project" value="UniProtKB-KW"/>
</dbReference>
<dbReference type="GO" id="GO:0003690">
    <property type="term" value="F:double-stranded DNA binding"/>
    <property type="evidence" value="ECO:0000318"/>
    <property type="project" value="GO_Central"/>
</dbReference>
<dbReference type="GO" id="GO:0008270">
    <property type="term" value="F:zinc ion binding"/>
    <property type="evidence" value="ECO:0007669"/>
    <property type="project" value="UniProtKB-UniRule"/>
</dbReference>
<dbReference type="GO" id="GO:0045892">
    <property type="term" value="P:negative regulation of DNA-templated transcription"/>
    <property type="evidence" value="ECO:0000318"/>
    <property type="project" value="GO_Central"/>
</dbReference>
<dbReference type="HAMAP" id="MF_00440">
    <property type="entry name" value="NrdR"/>
    <property type="match status" value="1"/>
</dbReference>
<dbReference type="InterPro" id="IPR005144">
    <property type="entry name" value="ATP-cone_dom"/>
</dbReference>
<dbReference type="InterPro" id="IPR055173">
    <property type="entry name" value="NrdR-like_N"/>
</dbReference>
<dbReference type="InterPro" id="IPR003796">
    <property type="entry name" value="RNR_NrdR-like"/>
</dbReference>
<dbReference type="NCBIfam" id="TIGR00244">
    <property type="entry name" value="transcriptional regulator NrdR"/>
    <property type="match status" value="1"/>
</dbReference>
<dbReference type="PANTHER" id="PTHR30455">
    <property type="entry name" value="TRANSCRIPTIONAL REPRESSOR NRDR"/>
    <property type="match status" value="1"/>
</dbReference>
<dbReference type="PANTHER" id="PTHR30455:SF2">
    <property type="entry name" value="TRANSCRIPTIONAL REPRESSOR NRDR"/>
    <property type="match status" value="1"/>
</dbReference>
<dbReference type="Pfam" id="PF03477">
    <property type="entry name" value="ATP-cone"/>
    <property type="match status" value="1"/>
</dbReference>
<dbReference type="Pfam" id="PF22811">
    <property type="entry name" value="Zn_ribbon_NrdR"/>
    <property type="match status" value="1"/>
</dbReference>
<dbReference type="PROSITE" id="PS51161">
    <property type="entry name" value="ATP_CONE"/>
    <property type="match status" value="1"/>
</dbReference>